<reference key="1">
    <citation type="journal article" date="2007" name="PLoS Genet.">
        <title>The complete genome sequence of Yersinia pseudotuberculosis IP31758, the causative agent of Far East scarlet-like fever.</title>
        <authorList>
            <person name="Eppinger M."/>
            <person name="Rosovitz M.J."/>
            <person name="Fricke W.F."/>
            <person name="Rasko D.A."/>
            <person name="Kokorina G."/>
            <person name="Fayolle C."/>
            <person name="Lindler L.E."/>
            <person name="Carniel E."/>
            <person name="Ravel J."/>
        </authorList>
    </citation>
    <scope>NUCLEOTIDE SEQUENCE [LARGE SCALE GENOMIC DNA]</scope>
    <source>
        <strain>IP 31758</strain>
    </source>
</reference>
<keyword id="KW-0067">ATP-binding</keyword>
<keyword id="KW-0520">NAD</keyword>
<keyword id="KW-0547">Nucleotide-binding</keyword>
<keyword id="KW-0548">Nucleotidyltransferase</keyword>
<keyword id="KW-0662">Pyridine nucleotide biosynthesis</keyword>
<keyword id="KW-0808">Transferase</keyword>
<sequence>MPIKSSDHSLYALFGGTFDPIHYGHLKPVEALAQQVGLQHIILLPNHVPPHRPQPEANAQQRLKMVELAVAGNPLFSVDSRELLRDSPSFTIETLEALRKERGAEQPLAFIIGQDSLLSLHKWHRWQALLDVCHLLVCARPGYSQSLETPELQQWLESHKVMDPQALSQRPHGAIYLADTPLLDISATDIRRRRHNGESCDDLLPQAVQRYIELQGLYRG</sequence>
<name>NADD_YERP3</name>
<feature type="chain" id="PRO_1000058998" description="Probable nicotinate-nucleotide adenylyltransferase">
    <location>
        <begin position="1"/>
        <end position="220"/>
    </location>
</feature>
<evidence type="ECO:0000255" key="1">
    <source>
        <dbReference type="HAMAP-Rule" id="MF_00244"/>
    </source>
</evidence>
<comment type="function">
    <text evidence="1">Catalyzes the reversible adenylation of nicotinate mononucleotide (NaMN) to nicotinic acid adenine dinucleotide (NaAD).</text>
</comment>
<comment type="catalytic activity">
    <reaction evidence="1">
        <text>nicotinate beta-D-ribonucleotide + ATP + H(+) = deamido-NAD(+) + diphosphate</text>
        <dbReference type="Rhea" id="RHEA:22860"/>
        <dbReference type="ChEBI" id="CHEBI:15378"/>
        <dbReference type="ChEBI" id="CHEBI:30616"/>
        <dbReference type="ChEBI" id="CHEBI:33019"/>
        <dbReference type="ChEBI" id="CHEBI:57502"/>
        <dbReference type="ChEBI" id="CHEBI:58437"/>
        <dbReference type="EC" id="2.7.7.18"/>
    </reaction>
</comment>
<comment type="pathway">
    <text evidence="1">Cofactor biosynthesis; NAD(+) biosynthesis; deamido-NAD(+) from nicotinate D-ribonucleotide: step 1/1.</text>
</comment>
<comment type="similarity">
    <text evidence="1">Belongs to the NadD family.</text>
</comment>
<dbReference type="EC" id="2.7.7.18" evidence="1"/>
<dbReference type="EMBL" id="CP000720">
    <property type="protein sequence ID" value="ABS46333.1"/>
    <property type="molecule type" value="Genomic_DNA"/>
</dbReference>
<dbReference type="RefSeq" id="WP_002210330.1">
    <property type="nucleotide sequence ID" value="NC_009708.1"/>
</dbReference>
<dbReference type="SMR" id="A7FKW3"/>
<dbReference type="GeneID" id="57976088"/>
<dbReference type="KEGG" id="ypi:YpsIP31758_2929"/>
<dbReference type="HOGENOM" id="CLU_069765_0_0_6"/>
<dbReference type="UniPathway" id="UPA00253">
    <property type="reaction ID" value="UER00332"/>
</dbReference>
<dbReference type="Proteomes" id="UP000002412">
    <property type="component" value="Chromosome"/>
</dbReference>
<dbReference type="GO" id="GO:0005524">
    <property type="term" value="F:ATP binding"/>
    <property type="evidence" value="ECO:0007669"/>
    <property type="project" value="UniProtKB-KW"/>
</dbReference>
<dbReference type="GO" id="GO:0004515">
    <property type="term" value="F:nicotinate-nucleotide adenylyltransferase activity"/>
    <property type="evidence" value="ECO:0007669"/>
    <property type="project" value="UniProtKB-UniRule"/>
</dbReference>
<dbReference type="GO" id="GO:0009435">
    <property type="term" value="P:NAD biosynthetic process"/>
    <property type="evidence" value="ECO:0007669"/>
    <property type="project" value="UniProtKB-UniRule"/>
</dbReference>
<dbReference type="CDD" id="cd02165">
    <property type="entry name" value="NMNAT"/>
    <property type="match status" value="1"/>
</dbReference>
<dbReference type="FunFam" id="3.40.50.620:FF:000039">
    <property type="entry name" value="Probable nicotinate-nucleotide adenylyltransferase"/>
    <property type="match status" value="1"/>
</dbReference>
<dbReference type="Gene3D" id="3.40.50.620">
    <property type="entry name" value="HUPs"/>
    <property type="match status" value="1"/>
</dbReference>
<dbReference type="HAMAP" id="MF_00244">
    <property type="entry name" value="NaMN_adenylyltr"/>
    <property type="match status" value="1"/>
</dbReference>
<dbReference type="InterPro" id="IPR004821">
    <property type="entry name" value="Cyt_trans-like"/>
</dbReference>
<dbReference type="InterPro" id="IPR005248">
    <property type="entry name" value="NadD/NMNAT"/>
</dbReference>
<dbReference type="InterPro" id="IPR014729">
    <property type="entry name" value="Rossmann-like_a/b/a_fold"/>
</dbReference>
<dbReference type="NCBIfam" id="TIGR00125">
    <property type="entry name" value="cyt_tran_rel"/>
    <property type="match status" value="1"/>
</dbReference>
<dbReference type="NCBIfam" id="TIGR00482">
    <property type="entry name" value="nicotinate (nicotinamide) nucleotide adenylyltransferase"/>
    <property type="match status" value="1"/>
</dbReference>
<dbReference type="NCBIfam" id="NF000839">
    <property type="entry name" value="PRK00071.1-1"/>
    <property type="match status" value="1"/>
</dbReference>
<dbReference type="NCBIfam" id="NF000840">
    <property type="entry name" value="PRK00071.1-3"/>
    <property type="match status" value="1"/>
</dbReference>
<dbReference type="PANTHER" id="PTHR39321">
    <property type="entry name" value="NICOTINATE-NUCLEOTIDE ADENYLYLTRANSFERASE-RELATED"/>
    <property type="match status" value="1"/>
</dbReference>
<dbReference type="PANTHER" id="PTHR39321:SF3">
    <property type="entry name" value="PHOSPHOPANTETHEINE ADENYLYLTRANSFERASE"/>
    <property type="match status" value="1"/>
</dbReference>
<dbReference type="Pfam" id="PF01467">
    <property type="entry name" value="CTP_transf_like"/>
    <property type="match status" value="1"/>
</dbReference>
<dbReference type="SUPFAM" id="SSF52374">
    <property type="entry name" value="Nucleotidylyl transferase"/>
    <property type="match status" value="1"/>
</dbReference>
<accession>A7FKW3</accession>
<protein>
    <recommendedName>
        <fullName evidence="1">Probable nicotinate-nucleotide adenylyltransferase</fullName>
        <ecNumber evidence="1">2.7.7.18</ecNumber>
    </recommendedName>
    <alternativeName>
        <fullName evidence="1">Deamido-NAD(+) diphosphorylase</fullName>
    </alternativeName>
    <alternativeName>
        <fullName evidence="1">Deamido-NAD(+) pyrophosphorylase</fullName>
    </alternativeName>
    <alternativeName>
        <fullName evidence="1">Nicotinate mononucleotide adenylyltransferase</fullName>
        <shortName evidence="1">NaMN adenylyltransferase</shortName>
    </alternativeName>
</protein>
<gene>
    <name evidence="1" type="primary">nadD</name>
    <name type="ordered locus">YpsIP31758_2929</name>
</gene>
<organism>
    <name type="scientific">Yersinia pseudotuberculosis serotype O:1b (strain IP 31758)</name>
    <dbReference type="NCBI Taxonomy" id="349747"/>
    <lineage>
        <taxon>Bacteria</taxon>
        <taxon>Pseudomonadati</taxon>
        <taxon>Pseudomonadota</taxon>
        <taxon>Gammaproteobacteria</taxon>
        <taxon>Enterobacterales</taxon>
        <taxon>Yersiniaceae</taxon>
        <taxon>Yersinia</taxon>
    </lineage>
</organism>
<proteinExistence type="inferred from homology"/>